<protein>
    <recommendedName>
        <fullName evidence="1">Endonuclease MutS2</fullName>
        <ecNumber evidence="1">3.1.-.-</ecNumber>
    </recommendedName>
    <alternativeName>
        <fullName evidence="1">Ribosome-associated protein quality control-upstream factor</fullName>
        <shortName evidence="1">RQC-upstream factor</shortName>
        <shortName evidence="1">RqcU</shortName>
        <ecNumber evidence="1">3.6.4.-</ecNumber>
    </alternativeName>
</protein>
<organism>
    <name type="scientific">Lachnoclostridium phytofermentans (strain ATCC 700394 / DSM 18823 / ISDg)</name>
    <name type="common">Clostridium phytofermentans</name>
    <dbReference type="NCBI Taxonomy" id="357809"/>
    <lineage>
        <taxon>Bacteria</taxon>
        <taxon>Bacillati</taxon>
        <taxon>Bacillota</taxon>
        <taxon>Clostridia</taxon>
        <taxon>Lachnospirales</taxon>
        <taxon>Lachnospiraceae</taxon>
    </lineage>
</organism>
<name>MUTS2_LACP7</name>
<comment type="function">
    <text evidence="1">Endonuclease that is involved in the suppression of homologous recombination and thus may have a key role in the control of bacterial genetic diversity.</text>
</comment>
<comment type="function">
    <text evidence="1">Acts as a ribosome collision sensor, splitting the ribosome into its 2 subunits. Detects stalled/collided 70S ribosomes which it binds and splits by an ATP-hydrolysis driven conformational change. Acts upstream of the ribosome quality control system (RQC), a ribosome-associated complex that mediates the extraction of incompletely synthesized nascent chains from stalled ribosomes and their subsequent degradation. Probably generates substrates for RQC.</text>
</comment>
<comment type="subunit">
    <text evidence="1">Homodimer. Binds to stalled ribosomes, contacting rRNA.</text>
</comment>
<comment type="similarity">
    <text evidence="1">Belongs to the DNA mismatch repair MutS family. MutS2 subfamily.</text>
</comment>
<proteinExistence type="inferred from homology"/>
<sequence length="796" mass="88400">MNEKALRTLEYHKIIEKLSALAGSSLGREKCHQLLPLVKLEDIVQMQQETTDALTRLYAKGTLSFSGIPDIRDTLMRLEIGASLGAGELLKISSVLTATLRAKNYGYNQKNNEETEEAAQDTLTERFHLLEPLSPINNEIRRCIISEEEIADDASPGLKSVRRQIKITNDKIHESLGSILNSASTKGMLQDAIITMRNGRYCLPIKQEYKNTFQGMMHDQSSTGSTAFIEPMAIVKLNNELAELAVREQEEIEKILAELSNLVATEKYNLKYNQTTLAELDFIFARAGLSKNMKASQPHFNNRHYINIKKGRHPLIDPKKVVPIDIYFGDKFDLLVITGPNTGGKTVSLKTVGLFTLMGQAGLHIPAFDGSELSIFEEVYADIGDEQSIEQSLSTFSSHMTNTVSILEHANENSLVLFDELGAGTDPTEGAALAMAILSYLHQRKIRTMATTHYSELKIFALSTDGVSNACCEFSVETLQPTYRLLIGIPGKSNAFAISSKLGLSNYIIEKAREFIGTKDESFEDVISNLEASRIAMEKDKAEAEQYKKEVEELKRKLAEKNSKIDDAKDRILREANEKARTILQEAKDYADETIRKYNKWGAGGANNKEMENERAALREKLGDTDSSLVSKAKKNRKQHKPSDFKVGDSVHVISLNLKGSVSTLPNAKGDLYVQMGILRSLVNISDLELIDEETIVAKALTKTQSGKIRMSKSMSISPELNIIGKRVDEALPLVDKYLDDAYLAHLPQVTIIHGRGTGALKEAVHAHLKRTNYVKGYRVGGFGEGDHGVTIVEFK</sequence>
<feature type="chain" id="PRO_1000093354" description="Endonuclease MutS2">
    <location>
        <begin position="1"/>
        <end position="796"/>
    </location>
</feature>
<feature type="domain" description="Smr" evidence="1">
    <location>
        <begin position="721"/>
        <end position="796"/>
    </location>
</feature>
<feature type="region of interest" description="Disordered" evidence="2">
    <location>
        <begin position="620"/>
        <end position="644"/>
    </location>
</feature>
<feature type="binding site" evidence="1">
    <location>
        <begin position="339"/>
        <end position="346"/>
    </location>
    <ligand>
        <name>ATP</name>
        <dbReference type="ChEBI" id="CHEBI:30616"/>
    </ligand>
</feature>
<keyword id="KW-0067">ATP-binding</keyword>
<keyword id="KW-0238">DNA-binding</keyword>
<keyword id="KW-0255">Endonuclease</keyword>
<keyword id="KW-0378">Hydrolase</keyword>
<keyword id="KW-0540">Nuclease</keyword>
<keyword id="KW-0547">Nucleotide-binding</keyword>
<keyword id="KW-1185">Reference proteome</keyword>
<keyword id="KW-0694">RNA-binding</keyword>
<keyword id="KW-0699">rRNA-binding</keyword>
<dbReference type="EC" id="3.1.-.-" evidence="1"/>
<dbReference type="EC" id="3.6.4.-" evidence="1"/>
<dbReference type="EMBL" id="CP000885">
    <property type="protein sequence ID" value="ABX40542.1"/>
    <property type="molecule type" value="Genomic_DNA"/>
</dbReference>
<dbReference type="RefSeq" id="WP_012198185.1">
    <property type="nucleotide sequence ID" value="NC_010001.1"/>
</dbReference>
<dbReference type="SMR" id="A9KR74"/>
<dbReference type="STRING" id="357809.Cphy_0153"/>
<dbReference type="KEGG" id="cpy:Cphy_0153"/>
<dbReference type="eggNOG" id="COG1193">
    <property type="taxonomic scope" value="Bacteria"/>
</dbReference>
<dbReference type="HOGENOM" id="CLU_011252_2_1_9"/>
<dbReference type="OrthoDB" id="9808166at2"/>
<dbReference type="Proteomes" id="UP000000370">
    <property type="component" value="Chromosome"/>
</dbReference>
<dbReference type="GO" id="GO:0005524">
    <property type="term" value="F:ATP binding"/>
    <property type="evidence" value="ECO:0007669"/>
    <property type="project" value="UniProtKB-UniRule"/>
</dbReference>
<dbReference type="GO" id="GO:0016887">
    <property type="term" value="F:ATP hydrolysis activity"/>
    <property type="evidence" value="ECO:0007669"/>
    <property type="project" value="InterPro"/>
</dbReference>
<dbReference type="GO" id="GO:0140664">
    <property type="term" value="F:ATP-dependent DNA damage sensor activity"/>
    <property type="evidence" value="ECO:0007669"/>
    <property type="project" value="InterPro"/>
</dbReference>
<dbReference type="GO" id="GO:0004519">
    <property type="term" value="F:endonuclease activity"/>
    <property type="evidence" value="ECO:0007669"/>
    <property type="project" value="UniProtKB-UniRule"/>
</dbReference>
<dbReference type="GO" id="GO:0030983">
    <property type="term" value="F:mismatched DNA binding"/>
    <property type="evidence" value="ECO:0007669"/>
    <property type="project" value="InterPro"/>
</dbReference>
<dbReference type="GO" id="GO:0043023">
    <property type="term" value="F:ribosomal large subunit binding"/>
    <property type="evidence" value="ECO:0007669"/>
    <property type="project" value="UniProtKB-UniRule"/>
</dbReference>
<dbReference type="GO" id="GO:0019843">
    <property type="term" value="F:rRNA binding"/>
    <property type="evidence" value="ECO:0007669"/>
    <property type="project" value="UniProtKB-UniRule"/>
</dbReference>
<dbReference type="GO" id="GO:0006298">
    <property type="term" value="P:mismatch repair"/>
    <property type="evidence" value="ECO:0007669"/>
    <property type="project" value="InterPro"/>
</dbReference>
<dbReference type="GO" id="GO:0045910">
    <property type="term" value="P:negative regulation of DNA recombination"/>
    <property type="evidence" value="ECO:0007669"/>
    <property type="project" value="InterPro"/>
</dbReference>
<dbReference type="GO" id="GO:0072344">
    <property type="term" value="P:rescue of stalled ribosome"/>
    <property type="evidence" value="ECO:0007669"/>
    <property type="project" value="UniProtKB-UniRule"/>
</dbReference>
<dbReference type="CDD" id="cd03280">
    <property type="entry name" value="ABC_MutS2"/>
    <property type="match status" value="1"/>
</dbReference>
<dbReference type="FunFam" id="3.40.50.300:FF:000830">
    <property type="entry name" value="Endonuclease MutS2"/>
    <property type="match status" value="1"/>
</dbReference>
<dbReference type="Gene3D" id="3.30.1370.110">
    <property type="match status" value="1"/>
</dbReference>
<dbReference type="Gene3D" id="3.40.50.300">
    <property type="entry name" value="P-loop containing nucleotide triphosphate hydrolases"/>
    <property type="match status" value="1"/>
</dbReference>
<dbReference type="HAMAP" id="MF_00092">
    <property type="entry name" value="MutS2"/>
    <property type="match status" value="1"/>
</dbReference>
<dbReference type="InterPro" id="IPR000432">
    <property type="entry name" value="DNA_mismatch_repair_MutS_C"/>
</dbReference>
<dbReference type="InterPro" id="IPR007696">
    <property type="entry name" value="DNA_mismatch_repair_MutS_core"/>
</dbReference>
<dbReference type="InterPro" id="IPR036187">
    <property type="entry name" value="DNA_mismatch_repair_MutS_sf"/>
</dbReference>
<dbReference type="InterPro" id="IPR046893">
    <property type="entry name" value="MSSS"/>
</dbReference>
<dbReference type="InterPro" id="IPR045076">
    <property type="entry name" value="MutS"/>
</dbReference>
<dbReference type="InterPro" id="IPR005747">
    <property type="entry name" value="MutS2"/>
</dbReference>
<dbReference type="InterPro" id="IPR027417">
    <property type="entry name" value="P-loop_NTPase"/>
</dbReference>
<dbReference type="InterPro" id="IPR002625">
    <property type="entry name" value="Smr_dom"/>
</dbReference>
<dbReference type="InterPro" id="IPR036063">
    <property type="entry name" value="Smr_dom_sf"/>
</dbReference>
<dbReference type="NCBIfam" id="TIGR01069">
    <property type="entry name" value="mutS2"/>
    <property type="match status" value="1"/>
</dbReference>
<dbReference type="PANTHER" id="PTHR48466:SF2">
    <property type="entry name" value="OS10G0509000 PROTEIN"/>
    <property type="match status" value="1"/>
</dbReference>
<dbReference type="PANTHER" id="PTHR48466">
    <property type="entry name" value="OS10G0509000 PROTEIN-RELATED"/>
    <property type="match status" value="1"/>
</dbReference>
<dbReference type="Pfam" id="PF20297">
    <property type="entry name" value="MSSS"/>
    <property type="match status" value="1"/>
</dbReference>
<dbReference type="Pfam" id="PF00488">
    <property type="entry name" value="MutS_V"/>
    <property type="match status" value="1"/>
</dbReference>
<dbReference type="Pfam" id="PF01713">
    <property type="entry name" value="Smr"/>
    <property type="match status" value="1"/>
</dbReference>
<dbReference type="PIRSF" id="PIRSF005814">
    <property type="entry name" value="MutS_YshD"/>
    <property type="match status" value="1"/>
</dbReference>
<dbReference type="SMART" id="SM00534">
    <property type="entry name" value="MUTSac"/>
    <property type="match status" value="1"/>
</dbReference>
<dbReference type="SMART" id="SM00533">
    <property type="entry name" value="MUTSd"/>
    <property type="match status" value="1"/>
</dbReference>
<dbReference type="SMART" id="SM00463">
    <property type="entry name" value="SMR"/>
    <property type="match status" value="1"/>
</dbReference>
<dbReference type="SUPFAM" id="SSF48334">
    <property type="entry name" value="DNA repair protein MutS, domain III"/>
    <property type="match status" value="1"/>
</dbReference>
<dbReference type="SUPFAM" id="SSF52540">
    <property type="entry name" value="P-loop containing nucleoside triphosphate hydrolases"/>
    <property type="match status" value="1"/>
</dbReference>
<dbReference type="SUPFAM" id="SSF160443">
    <property type="entry name" value="SMR domain-like"/>
    <property type="match status" value="1"/>
</dbReference>
<dbReference type="PROSITE" id="PS00486">
    <property type="entry name" value="DNA_MISMATCH_REPAIR_2"/>
    <property type="match status" value="1"/>
</dbReference>
<dbReference type="PROSITE" id="PS50828">
    <property type="entry name" value="SMR"/>
    <property type="match status" value="1"/>
</dbReference>
<accession>A9KR74</accession>
<gene>
    <name evidence="1" type="primary">mutS2</name>
    <name evidence="1" type="synonym">rqcU</name>
    <name type="ordered locus">Cphy_0153</name>
</gene>
<reference key="1">
    <citation type="submission" date="2007-11" db="EMBL/GenBank/DDBJ databases">
        <title>Complete genome sequence of Clostridium phytofermentans ISDg.</title>
        <authorList>
            <person name="Leschine S.B."/>
            <person name="Warnick T.A."/>
            <person name="Blanchard J.L."/>
            <person name="Schnell D.J."/>
            <person name="Petit E.L."/>
            <person name="LaTouf W.G."/>
            <person name="Copeland A."/>
            <person name="Lucas S."/>
            <person name="Lapidus A."/>
            <person name="Barry K."/>
            <person name="Glavina del Rio T."/>
            <person name="Dalin E."/>
            <person name="Tice H."/>
            <person name="Pitluck S."/>
            <person name="Kiss H."/>
            <person name="Brettin T."/>
            <person name="Bruce D."/>
            <person name="Detter J.C."/>
            <person name="Han C."/>
            <person name="Kuske C."/>
            <person name="Schmutz J."/>
            <person name="Larimer F."/>
            <person name="Land M."/>
            <person name="Hauser L."/>
            <person name="Kyrpides N."/>
            <person name="Kim E.A."/>
            <person name="Richardson P."/>
        </authorList>
    </citation>
    <scope>NUCLEOTIDE SEQUENCE [LARGE SCALE GENOMIC DNA]</scope>
    <source>
        <strain>ATCC 700394 / DSM 18823 / ISDg</strain>
    </source>
</reference>
<evidence type="ECO:0000255" key="1">
    <source>
        <dbReference type="HAMAP-Rule" id="MF_00092"/>
    </source>
</evidence>
<evidence type="ECO:0000256" key="2">
    <source>
        <dbReference type="SAM" id="MobiDB-lite"/>
    </source>
</evidence>